<accession>Q96T49</accession>
<accession>A2RRR6</accession>
<accession>E9PFS8</accession>
<accession>O94912</accession>
<accession>Q5W9G4</accession>
<accession>Q9NQG4</accession>
<evidence type="ECO:0000250" key="1">
    <source>
        <dbReference type="UniProtKB" id="Q8VHQ3"/>
    </source>
</evidence>
<evidence type="ECO:0000250" key="2">
    <source>
        <dbReference type="UniProtKB" id="Q923M0"/>
    </source>
</evidence>
<evidence type="ECO:0000250" key="3">
    <source>
        <dbReference type="UniProtKB" id="Q95N27"/>
    </source>
</evidence>
<evidence type="ECO:0000255" key="4"/>
<evidence type="ECO:0000256" key="5">
    <source>
        <dbReference type="SAM" id="MobiDB-lite"/>
    </source>
</evidence>
<evidence type="ECO:0000269" key="6">
    <source>
    </source>
</evidence>
<evidence type="ECO:0000269" key="7">
    <source>
    </source>
</evidence>
<evidence type="ECO:0000269" key="8">
    <source>
    </source>
</evidence>
<evidence type="ECO:0000269" key="9">
    <source>
    </source>
</evidence>
<evidence type="ECO:0000269" key="10">
    <source>
    </source>
</evidence>
<evidence type="ECO:0000303" key="11">
    <source>
    </source>
</evidence>
<evidence type="ECO:0000305" key="12"/>
<evidence type="ECO:0007744" key="13">
    <source>
    </source>
</evidence>
<feature type="chain" id="PRO_0000067043" description="Protein phosphatase 1 regulatory inhibitor subunit 16B">
    <location>
        <begin position="1"/>
        <end position="564"/>
    </location>
</feature>
<feature type="propeptide" id="PRO_0000396710" description="Removed in mature form" evidence="4">
    <location>
        <begin position="565"/>
        <end position="567"/>
    </location>
</feature>
<feature type="repeat" description="ANK 1">
    <location>
        <begin position="100"/>
        <end position="129"/>
    </location>
</feature>
<feature type="repeat" description="ANK 2">
    <location>
        <begin position="133"/>
        <end position="162"/>
    </location>
</feature>
<feature type="repeat" description="ANK 3">
    <location>
        <begin position="228"/>
        <end position="257"/>
    </location>
</feature>
<feature type="repeat" description="ANK 4">
    <location>
        <begin position="261"/>
        <end position="290"/>
    </location>
</feature>
<feature type="repeat" description="ANK 5">
    <location>
        <begin position="530"/>
        <end position="559"/>
    </location>
</feature>
<feature type="region of interest" description="Disordered" evidence="5">
    <location>
        <begin position="378"/>
        <end position="403"/>
    </location>
</feature>
<feature type="region of interest" description="Disordered" evidence="5">
    <location>
        <begin position="504"/>
        <end position="525"/>
    </location>
</feature>
<feature type="coiled-coil region" evidence="4">
    <location>
        <begin position="15"/>
        <end position="55"/>
    </location>
</feature>
<feature type="compositionally biased region" description="Basic and acidic residues" evidence="5">
    <location>
        <begin position="385"/>
        <end position="403"/>
    </location>
</feature>
<feature type="compositionally biased region" description="Polar residues" evidence="5">
    <location>
        <begin position="504"/>
        <end position="515"/>
    </location>
</feature>
<feature type="modified residue" description="Phosphoserine" evidence="1">
    <location>
        <position position="69"/>
    </location>
</feature>
<feature type="modified residue" description="Phosphoserine" evidence="3">
    <location>
        <position position="333"/>
    </location>
</feature>
<feature type="modified residue" description="Phosphoserine" evidence="3">
    <location>
        <position position="337"/>
    </location>
</feature>
<feature type="modified residue" description="Phosphoserine" evidence="13">
    <location>
        <position position="350"/>
    </location>
</feature>
<feature type="modified residue" description="Phosphoserine" evidence="13">
    <location>
        <position position="476"/>
    </location>
</feature>
<feature type="modified residue" description="Cysteine methyl ester" evidence="2">
    <location>
        <position position="564"/>
    </location>
</feature>
<feature type="lipid moiety-binding region" description="S-palmitoyl cysteine" evidence="2">
    <location>
        <position position="563"/>
    </location>
</feature>
<feature type="lipid moiety-binding region" description="S-farnesyl cysteine" evidence="2">
    <location>
        <position position="564"/>
    </location>
</feature>
<feature type="splice variant" id="VSP_047508" description="In isoform 2." evidence="11">
    <location>
        <begin position="233"/>
        <end position="274"/>
    </location>
</feature>
<feature type="mutagenesis site" description="Strongly decreased interaction with EEF1A1." evidence="10">
    <original>G</original>
    <variation>A</variation>
    <location>
        <position position="252"/>
    </location>
</feature>
<dbReference type="EMBL" id="AF362910">
    <property type="protein sequence ID" value="AAK52796.1"/>
    <property type="molecule type" value="mRNA"/>
</dbReference>
<dbReference type="EMBL" id="AB020630">
    <property type="protein sequence ID" value="BAA74846.2"/>
    <property type="status" value="ALT_INIT"/>
    <property type="molecule type" value="mRNA"/>
</dbReference>
<dbReference type="EMBL" id="AL023803">
    <property type="status" value="NOT_ANNOTATED_CDS"/>
    <property type="molecule type" value="Genomic_DNA"/>
</dbReference>
<dbReference type="EMBL" id="AL031657">
    <property type="status" value="NOT_ANNOTATED_CDS"/>
    <property type="molecule type" value="Genomic_DNA"/>
</dbReference>
<dbReference type="EMBL" id="AL121889">
    <property type="status" value="NOT_ANNOTATED_CDS"/>
    <property type="molecule type" value="Genomic_DNA"/>
</dbReference>
<dbReference type="EMBL" id="CH471077">
    <property type="protein sequence ID" value="EAW76009.1"/>
    <property type="molecule type" value="Genomic_DNA"/>
</dbReference>
<dbReference type="EMBL" id="BC131801">
    <property type="protein sequence ID" value="AAI31802.1"/>
    <property type="molecule type" value="mRNA"/>
</dbReference>
<dbReference type="EMBL" id="BC152467">
    <property type="protein sequence ID" value="AAI52468.1"/>
    <property type="molecule type" value="mRNA"/>
</dbReference>
<dbReference type="EMBL" id="AB177855">
    <property type="protein sequence ID" value="BAD66833.1"/>
    <property type="molecule type" value="mRNA"/>
</dbReference>
<dbReference type="CCDS" id="CCDS13309.1">
    <molecule id="Q96T49-1"/>
</dbReference>
<dbReference type="CCDS" id="CCDS54462.1">
    <molecule id="Q96T49-2"/>
</dbReference>
<dbReference type="RefSeq" id="NP_001166206.1">
    <molecule id="Q96T49-2"/>
    <property type="nucleotide sequence ID" value="NM_001172735.3"/>
</dbReference>
<dbReference type="RefSeq" id="NP_056383.1">
    <molecule id="Q96T49-1"/>
    <property type="nucleotide sequence ID" value="NM_015568.4"/>
</dbReference>
<dbReference type="SMR" id="Q96T49"/>
<dbReference type="BioGRID" id="117514">
    <property type="interactions" value="69"/>
</dbReference>
<dbReference type="ELM" id="Q96T49"/>
<dbReference type="FunCoup" id="Q96T49">
    <property type="interactions" value="1239"/>
</dbReference>
<dbReference type="IntAct" id="Q96T49">
    <property type="interactions" value="65"/>
</dbReference>
<dbReference type="MINT" id="Q96T49"/>
<dbReference type="STRING" id="9606.ENSP00000299824"/>
<dbReference type="GlyGen" id="Q96T49">
    <property type="glycosylation" value="1 site"/>
</dbReference>
<dbReference type="iPTMnet" id="Q96T49"/>
<dbReference type="PhosphoSitePlus" id="Q96T49"/>
<dbReference type="SwissPalm" id="Q96T49"/>
<dbReference type="BioMuta" id="PPP1R16B"/>
<dbReference type="DMDM" id="22256977"/>
<dbReference type="jPOST" id="Q96T49"/>
<dbReference type="MassIVE" id="Q96T49"/>
<dbReference type="PaxDb" id="9606-ENSP00000299824"/>
<dbReference type="PeptideAtlas" id="Q96T49"/>
<dbReference type="ProteomicsDB" id="20168"/>
<dbReference type="ProteomicsDB" id="78183">
    <molecule id="Q96T49-1"/>
</dbReference>
<dbReference type="Antibodypedia" id="26914">
    <property type="antibodies" value="147 antibodies from 25 providers"/>
</dbReference>
<dbReference type="DNASU" id="26051"/>
<dbReference type="Ensembl" id="ENST00000299824.6">
    <molecule id="Q96T49-1"/>
    <property type="protein sequence ID" value="ENSP00000299824.1"/>
    <property type="gene ID" value="ENSG00000101445.10"/>
</dbReference>
<dbReference type="Ensembl" id="ENST00000373331.2">
    <molecule id="Q96T49-2"/>
    <property type="protein sequence ID" value="ENSP00000362428.1"/>
    <property type="gene ID" value="ENSG00000101445.10"/>
</dbReference>
<dbReference type="GeneID" id="26051"/>
<dbReference type="KEGG" id="hsa:26051"/>
<dbReference type="MANE-Select" id="ENST00000299824.6">
    <property type="protein sequence ID" value="ENSP00000299824.1"/>
    <property type="RefSeq nucleotide sequence ID" value="NM_015568.4"/>
    <property type="RefSeq protein sequence ID" value="NP_056383.1"/>
</dbReference>
<dbReference type="UCSC" id="uc002xje.3">
    <molecule id="Q96T49-1"/>
    <property type="organism name" value="human"/>
</dbReference>
<dbReference type="AGR" id="HGNC:15850"/>
<dbReference type="CTD" id="26051"/>
<dbReference type="DisGeNET" id="26051"/>
<dbReference type="GeneCards" id="PPP1R16B"/>
<dbReference type="HGNC" id="HGNC:15850">
    <property type="gene designation" value="PPP1R16B"/>
</dbReference>
<dbReference type="HPA" id="ENSG00000101445">
    <property type="expression patterns" value="Tissue enhanced (brain, lymphoid tissue)"/>
</dbReference>
<dbReference type="MIM" id="613275">
    <property type="type" value="gene"/>
</dbReference>
<dbReference type="neXtProt" id="NX_Q96T49"/>
<dbReference type="OpenTargets" id="ENSG00000101445"/>
<dbReference type="PharmGKB" id="PA33635"/>
<dbReference type="VEuPathDB" id="HostDB:ENSG00000101445"/>
<dbReference type="eggNOG" id="KOG0505">
    <property type="taxonomic scope" value="Eukaryota"/>
</dbReference>
<dbReference type="GeneTree" id="ENSGT00940000154090"/>
<dbReference type="HOGENOM" id="CLU_000134_54_2_1"/>
<dbReference type="InParanoid" id="Q96T49"/>
<dbReference type="OMA" id="MVWQQLG"/>
<dbReference type="OrthoDB" id="19014at2759"/>
<dbReference type="PAN-GO" id="Q96T49">
    <property type="GO annotations" value="6 GO annotations based on evolutionary models"/>
</dbReference>
<dbReference type="PhylomeDB" id="Q96T49"/>
<dbReference type="TreeFam" id="TF316803"/>
<dbReference type="PathwayCommons" id="Q96T49"/>
<dbReference type="SignaLink" id="Q96T49"/>
<dbReference type="SIGNOR" id="Q96T49"/>
<dbReference type="BioGRID-ORCS" id="26051">
    <property type="hits" value="14 hits in 1160 CRISPR screens"/>
</dbReference>
<dbReference type="ChiTaRS" id="PPP1R16B">
    <property type="organism name" value="human"/>
</dbReference>
<dbReference type="GenomeRNAi" id="26051"/>
<dbReference type="Pharos" id="Q96T49">
    <property type="development level" value="Tbio"/>
</dbReference>
<dbReference type="PRO" id="PR:Q96T49"/>
<dbReference type="Proteomes" id="UP000005640">
    <property type="component" value="Chromosome 20"/>
</dbReference>
<dbReference type="RNAct" id="Q96T49">
    <property type="molecule type" value="protein"/>
</dbReference>
<dbReference type="Bgee" id="ENSG00000101445">
    <property type="expression patterns" value="Expressed in CA1 field of hippocampus and 179 other cell types or tissues"/>
</dbReference>
<dbReference type="GO" id="GO:0042995">
    <property type="term" value="C:cell projection"/>
    <property type="evidence" value="ECO:0000314"/>
    <property type="project" value="GO_Central"/>
</dbReference>
<dbReference type="GO" id="GO:0005737">
    <property type="term" value="C:cytoplasm"/>
    <property type="evidence" value="ECO:0000318"/>
    <property type="project" value="GO_Central"/>
</dbReference>
<dbReference type="GO" id="GO:0016607">
    <property type="term" value="C:nuclear speck"/>
    <property type="evidence" value="ECO:0000314"/>
    <property type="project" value="HPA"/>
</dbReference>
<dbReference type="GO" id="GO:0005634">
    <property type="term" value="C:nucleus"/>
    <property type="evidence" value="ECO:0000314"/>
    <property type="project" value="UniProtKB"/>
</dbReference>
<dbReference type="GO" id="GO:0048471">
    <property type="term" value="C:perinuclear region of cytoplasm"/>
    <property type="evidence" value="ECO:0000314"/>
    <property type="project" value="UniProtKB"/>
</dbReference>
<dbReference type="GO" id="GO:0005886">
    <property type="term" value="C:plasma membrane"/>
    <property type="evidence" value="ECO:0000314"/>
    <property type="project" value="HPA"/>
</dbReference>
<dbReference type="GO" id="GO:0004857">
    <property type="term" value="F:enzyme inhibitor activity"/>
    <property type="evidence" value="ECO:0000318"/>
    <property type="project" value="GO_Central"/>
</dbReference>
<dbReference type="GO" id="GO:0017020">
    <property type="term" value="F:myosin phosphatase regulator activity"/>
    <property type="evidence" value="ECO:0000318"/>
    <property type="project" value="GO_Central"/>
</dbReference>
<dbReference type="GO" id="GO:0019888">
    <property type="term" value="F:protein phosphatase regulator activity"/>
    <property type="evidence" value="ECO:0000314"/>
    <property type="project" value="GO_Central"/>
</dbReference>
<dbReference type="GO" id="GO:0061028">
    <property type="term" value="P:establishment of endothelial barrier"/>
    <property type="evidence" value="ECO:0000315"/>
    <property type="project" value="GO_Central"/>
</dbReference>
<dbReference type="GO" id="GO:1903589">
    <property type="term" value="P:positive regulation of blood vessel endothelial cell proliferation involved in sprouting angiogenesis"/>
    <property type="evidence" value="ECO:0000315"/>
    <property type="project" value="GO_Central"/>
</dbReference>
<dbReference type="GO" id="GO:0001938">
    <property type="term" value="P:positive regulation of endothelial cell proliferation"/>
    <property type="evidence" value="ECO:0000315"/>
    <property type="project" value="GO_Central"/>
</dbReference>
<dbReference type="GO" id="GO:0051489">
    <property type="term" value="P:regulation of filopodium assembly"/>
    <property type="evidence" value="ECO:0000250"/>
    <property type="project" value="UniProtKB"/>
</dbReference>
<dbReference type="GO" id="GO:0051896">
    <property type="term" value="P:regulation of phosphatidylinositol 3-kinase/protein kinase B signal transduction"/>
    <property type="evidence" value="ECO:0000315"/>
    <property type="project" value="GO_Central"/>
</dbReference>
<dbReference type="GO" id="GO:1903670">
    <property type="term" value="P:regulation of sprouting angiogenesis"/>
    <property type="evidence" value="ECO:0000318"/>
    <property type="project" value="GO_Central"/>
</dbReference>
<dbReference type="FunFam" id="1.25.40.20:FF:000105">
    <property type="entry name" value="protein phosphatase 1 regulatory inhibitor subunit 16B"/>
    <property type="match status" value="1"/>
</dbReference>
<dbReference type="FunFam" id="1.25.40.20:FF:000079">
    <property type="entry name" value="Protein phosphatase 1 regulatory subunit 16B"/>
    <property type="match status" value="1"/>
</dbReference>
<dbReference type="Gene3D" id="1.25.40.20">
    <property type="entry name" value="Ankyrin repeat-containing domain"/>
    <property type="match status" value="2"/>
</dbReference>
<dbReference type="InterPro" id="IPR002110">
    <property type="entry name" value="Ankyrin_rpt"/>
</dbReference>
<dbReference type="InterPro" id="IPR036770">
    <property type="entry name" value="Ankyrin_rpt-contain_sf"/>
</dbReference>
<dbReference type="InterPro" id="IPR017417">
    <property type="entry name" value="Pase-1_reg_su_16AB"/>
</dbReference>
<dbReference type="InterPro" id="IPR051226">
    <property type="entry name" value="PP1_Regulatory_Subunit"/>
</dbReference>
<dbReference type="PANTHER" id="PTHR24179:SF31">
    <property type="entry name" value="PROTEIN PHOSPHATASE 1 REGULATORY INHIBITOR SUBUNIT 16B"/>
    <property type="match status" value="1"/>
</dbReference>
<dbReference type="PANTHER" id="PTHR24179">
    <property type="entry name" value="PROTEIN PHOSPHATASE 1 REGULATORY SUBUNIT 12"/>
    <property type="match status" value="1"/>
</dbReference>
<dbReference type="Pfam" id="PF12796">
    <property type="entry name" value="Ank_2"/>
    <property type="match status" value="2"/>
</dbReference>
<dbReference type="PIRSF" id="PIRSF038159">
    <property type="entry name" value="PP1_16AB_vert"/>
    <property type="match status" value="1"/>
</dbReference>
<dbReference type="SMART" id="SM00248">
    <property type="entry name" value="ANK"/>
    <property type="match status" value="5"/>
</dbReference>
<dbReference type="SUPFAM" id="SSF48403">
    <property type="entry name" value="Ankyrin repeat"/>
    <property type="match status" value="1"/>
</dbReference>
<dbReference type="PROSITE" id="PS50297">
    <property type="entry name" value="ANK_REP_REGION"/>
    <property type="match status" value="1"/>
</dbReference>
<dbReference type="PROSITE" id="PS50088">
    <property type="entry name" value="ANK_REPEAT"/>
    <property type="match status" value="4"/>
</dbReference>
<organism>
    <name type="scientific">Homo sapiens</name>
    <name type="common">Human</name>
    <dbReference type="NCBI Taxonomy" id="9606"/>
    <lineage>
        <taxon>Eukaryota</taxon>
        <taxon>Metazoa</taxon>
        <taxon>Chordata</taxon>
        <taxon>Craniata</taxon>
        <taxon>Vertebrata</taxon>
        <taxon>Euteleostomi</taxon>
        <taxon>Mammalia</taxon>
        <taxon>Eutheria</taxon>
        <taxon>Euarchontoglires</taxon>
        <taxon>Primates</taxon>
        <taxon>Haplorrhini</taxon>
        <taxon>Catarrhini</taxon>
        <taxon>Hominidae</taxon>
        <taxon>Homo</taxon>
    </lineage>
</organism>
<protein>
    <recommendedName>
        <fullName>Protein phosphatase 1 regulatory inhibitor subunit 16B</fullName>
    </recommendedName>
    <alternativeName>
        <fullName>Ankyrin repeat domain-containing protein 4</fullName>
    </alternativeName>
    <alternativeName>
        <fullName>CAAX box protein TIMAP</fullName>
    </alternativeName>
    <alternativeName>
        <fullName>TGF-beta-inhibited membrane-associated protein</fullName>
        <shortName>hTIMAP</shortName>
    </alternativeName>
</protein>
<comment type="function">
    <text evidence="1 3 6 7 9 10">Regulator of protein phosphatase 1 (PP1) that acts as a positive regulator of pulmonary endothelial cell (EC) barrier function (PubMed:18586956). Involved in the regulation of the PI3K/AKT signaling pathway, angiogenesis and endothelial cell proliferation (PubMed:25007873). Regulates angiogenesis and endothelial cell proliferation through the control of ECE1 dephosphorylation, trafficking and activity (By similarity). Protects the endothelial barrier from lipopolysaccharide (LPS)-induced vascular leakage (By similarity). Involved in the regulation of endothelial cell filopodia extension (By similarity). May be a downstream target for TGF-beta1 signaling cascade in endothelial cells (PubMed:16263087, PubMed:18586956). Involved in PKA-mediated moesin dephosphorylation which is important in EC barrier protection against thrombin stimulation (PubMed:18586956). Promotes the interaction of PPP1CA with RPSA/LAMR1 and in turn facilitates the dephosphorylation of RPSA/LAMR1 (PubMed:16263087). Involved in the dephosphorylation of EEF1A1 (PubMed:26497934).</text>
</comment>
<comment type="subunit">
    <text evidence="3 6 7 9 10">Interacts with PPP1CA, PPP1CB and MSN. Interacts (via its fourth ankyrin repeat) with the mature dimeric form of RPSA/LAMR1 (PubMed:16263087, PubMed:18586956). Interacts with EEF1A1 (PubMed:26497934). Interacts with PTEN (PubMed:25007873). Interacts with ECE1 (By similarity).</text>
</comment>
<comment type="interaction">
    <interactant intactId="EBI-10293968">
        <id>Q96T49</id>
    </interactant>
    <interactant intactId="EBI-1166928">
        <id>Q8N5M1</id>
        <label>ATPAF2</label>
    </interactant>
    <organismsDiffer>false</organismsDiffer>
    <experiments>3</experiments>
</comment>
<comment type="interaction">
    <interactant intactId="EBI-10293968">
        <id>Q96T49</id>
    </interactant>
    <interactant intactId="EBI-5278764">
        <id>Q96GN5</id>
        <label>CDCA7L</label>
    </interactant>
    <organismsDiffer>false</organismsDiffer>
    <experiments>3</experiments>
</comment>
<comment type="interaction">
    <interactant intactId="EBI-10293968">
        <id>Q96T49</id>
    </interactant>
    <interactant intactId="EBI-747776">
        <id>Q53EZ4</id>
        <label>CEP55</label>
    </interactant>
    <organismsDiffer>false</organismsDiffer>
    <experiments>5</experiments>
</comment>
<comment type="interaction">
    <interactant intactId="EBI-10293968">
        <id>Q96T49</id>
    </interactant>
    <interactant intactId="EBI-739624">
        <id>Q8NHQ1</id>
        <label>CEP70</label>
    </interactant>
    <organismsDiffer>false</organismsDiffer>
    <experiments>3</experiments>
</comment>
<comment type="interaction">
    <interactant intactId="EBI-10293968">
        <id>Q96T49</id>
    </interactant>
    <interactant intactId="EBI-748171">
        <id>O43186</id>
        <label>CRX</label>
    </interactant>
    <organismsDiffer>false</organismsDiffer>
    <experiments>4</experiments>
</comment>
<comment type="interaction">
    <interactant intactId="EBI-10293968">
        <id>Q96T49</id>
    </interactant>
    <interactant intactId="EBI-739789">
        <id>Q92997</id>
        <label>DVL3</label>
    </interactant>
    <organismsDiffer>false</organismsDiffer>
    <experiments>3</experiments>
</comment>
<comment type="interaction">
    <interactant intactId="EBI-10293968">
        <id>Q96T49</id>
    </interactant>
    <interactant intactId="EBI-1384254">
        <id>Q86UY5</id>
        <label>FAM83A</label>
    </interactant>
    <organismsDiffer>false</organismsDiffer>
    <experiments>3</experiments>
</comment>
<comment type="interaction">
    <interactant intactId="EBI-10293968">
        <id>Q96T49</id>
    </interactant>
    <interactant intactId="EBI-2513774">
        <id>O95363</id>
        <label>FARS2</label>
    </interactant>
    <organismsDiffer>false</organismsDiffer>
    <experiments>3</experiments>
</comment>
<comment type="interaction">
    <interactant intactId="EBI-10293968">
        <id>Q96T49</id>
    </interactant>
    <interactant intactId="EBI-719415">
        <id>Q4VC44</id>
        <label>FLYWCH1</label>
    </interactant>
    <organismsDiffer>false</organismsDiffer>
    <experiments>3</experiments>
</comment>
<comment type="interaction">
    <interactant intactId="EBI-10293968">
        <id>Q96T49</id>
    </interactant>
    <interactant intactId="EBI-744302">
        <id>P14136</id>
        <label>GFAP</label>
    </interactant>
    <organismsDiffer>false</organismsDiffer>
    <experiments>3</experiments>
</comment>
<comment type="interaction">
    <interactant intactId="EBI-10293968">
        <id>Q96T49</id>
    </interactant>
    <interactant intactId="EBI-618309">
        <id>Q08379</id>
        <label>GOLGA2</label>
    </interactant>
    <organismsDiffer>false</organismsDiffer>
    <experiments>6</experiments>
</comment>
<comment type="interaction">
    <interactant intactId="EBI-10293968">
        <id>Q96T49</id>
    </interactant>
    <interactant intactId="EBI-11956675">
        <id>Q9GZV7</id>
        <label>HAPLN2</label>
    </interactant>
    <organismsDiffer>false</organismsDiffer>
    <experiments>3</experiments>
</comment>
<comment type="interaction">
    <interactant intactId="EBI-10293968">
        <id>Q96T49</id>
    </interactant>
    <interactant intactId="EBI-517086">
        <id>O43464</id>
        <label>HTRA2</label>
    </interactant>
    <organismsDiffer>false</organismsDiffer>
    <experiments>3</experiments>
</comment>
<comment type="interaction">
    <interactant intactId="EBI-10293968">
        <id>Q96T49</id>
    </interactant>
    <interactant intactId="EBI-466029">
        <id>P42858</id>
        <label>HTT</label>
    </interactant>
    <organismsDiffer>false</organismsDiffer>
    <experiments>3</experiments>
</comment>
<comment type="interaction">
    <interactant intactId="EBI-10293968">
        <id>Q96T49</id>
    </interactant>
    <interactant intactId="EBI-747204">
        <id>Q9UKT9</id>
        <label>IKZF3</label>
    </interactant>
    <organismsDiffer>false</organismsDiffer>
    <experiments>7</experiments>
</comment>
<comment type="interaction">
    <interactant intactId="EBI-10293968">
        <id>Q96T49</id>
    </interactant>
    <interactant intactId="EBI-4397613">
        <id>Q7L273</id>
        <label>KCTD9</label>
    </interactant>
    <organismsDiffer>false</organismsDiffer>
    <experiments>3</experiments>
</comment>
<comment type="interaction">
    <interactant intactId="EBI-10293968">
        <id>Q96T49</id>
    </interactant>
    <interactant intactId="EBI-299134">
        <id>P61326</id>
        <label>MAGOH</label>
    </interactant>
    <organismsDiffer>false</organismsDiffer>
    <experiments>3</experiments>
</comment>
<comment type="interaction">
    <interactant intactId="EBI-10293968">
        <id>Q96T49</id>
    </interactant>
    <interactant intactId="EBI-2555085">
        <id>Q8IVT2</id>
        <label>MISP</label>
    </interactant>
    <organismsDiffer>false</organismsDiffer>
    <experiments>3</experiments>
</comment>
<comment type="interaction">
    <interactant intactId="EBI-10293968">
        <id>Q96T49</id>
    </interactant>
    <interactant intactId="EBI-10178578">
        <id>I6L9F6</id>
        <label>NEFL</label>
    </interactant>
    <organismsDiffer>false</organismsDiffer>
    <experiments>3</experiments>
</comment>
<comment type="interaction">
    <interactant intactId="EBI-10293968">
        <id>Q96T49</id>
    </interactant>
    <interactant intactId="EBI-11022007">
        <id>Q9HBE1-4</id>
        <label>PATZ1</label>
    </interactant>
    <organismsDiffer>false</organismsDiffer>
    <experiments>3</experiments>
</comment>
<comment type="interaction">
    <interactant intactId="EBI-10293968">
        <id>Q96T49</id>
    </interactant>
    <interactant intactId="EBI-713786">
        <id>Q8IXK0</id>
        <label>PHC2</label>
    </interactant>
    <organismsDiffer>false</organismsDiffer>
    <experiments>4</experiments>
</comment>
<comment type="interaction">
    <interactant intactId="EBI-10293968">
        <id>Q96T49</id>
    </interactant>
    <interactant intactId="EBI-12014286">
        <id>Q494U1-3</id>
        <label>PLEKHN1</label>
    </interactant>
    <organismsDiffer>false</organismsDiffer>
    <experiments>3</experiments>
</comment>
<comment type="interaction">
    <interactant intactId="EBI-10293968">
        <id>Q96T49</id>
    </interactant>
    <interactant intactId="EBI-357253">
        <id>P62136</id>
        <label>PPP1CA</label>
    </interactant>
    <organismsDiffer>false</organismsDiffer>
    <experiments>5</experiments>
</comment>
<comment type="interaction">
    <interactant intactId="EBI-10293968">
        <id>Q96T49</id>
    </interactant>
    <interactant intactId="EBI-352350">
        <id>P62140</id>
        <label>PPP1CB</label>
    </interactant>
    <organismsDiffer>false</organismsDiffer>
    <experiments>6</experiments>
</comment>
<comment type="interaction">
    <interactant intactId="EBI-10293968">
        <id>Q96T49</id>
    </interactant>
    <interactant intactId="EBI-752074">
        <id>P41219</id>
        <label>PRPH</label>
    </interactant>
    <organismsDiffer>false</organismsDiffer>
    <experiments>3</experiments>
</comment>
<comment type="interaction">
    <interactant intactId="EBI-10293968">
        <id>Q96T49</id>
    </interactant>
    <interactant intactId="EBI-712376">
        <id>P40937</id>
        <label>RFC5</label>
    </interactant>
    <organismsDiffer>false</organismsDiffer>
    <experiments>3</experiments>
</comment>
<comment type="interaction">
    <interactant intactId="EBI-10293968">
        <id>Q96T49</id>
    </interactant>
    <interactant intactId="EBI-748391">
        <id>Q9BWG6</id>
        <label>SCNM1</label>
    </interactant>
    <organismsDiffer>false</organismsDiffer>
    <experiments>3</experiments>
</comment>
<comment type="interaction">
    <interactant intactId="EBI-10293968">
        <id>Q96T49</id>
    </interactant>
    <interactant intactId="EBI-348469">
        <id>Q15427</id>
        <label>SF3B4</label>
    </interactant>
    <organismsDiffer>false</organismsDiffer>
    <experiments>4</experiments>
</comment>
<comment type="interaction">
    <interactant intactId="EBI-10293968">
        <id>Q96T49</id>
    </interactant>
    <interactant intactId="EBI-79084">
        <id>Q92529</id>
        <label>SHC3</label>
    </interactant>
    <organismsDiffer>false</organismsDiffer>
    <experiments>3</experiments>
</comment>
<comment type="interaction">
    <interactant intactId="EBI-10293968">
        <id>Q96T49</id>
    </interactant>
    <interactant intactId="EBI-747797">
        <id>Q9BSH4</id>
        <label>TACO1</label>
    </interactant>
    <organismsDiffer>false</organismsDiffer>
    <experiments>3</experiments>
</comment>
<comment type="interaction">
    <interactant intactId="EBI-10293968">
        <id>Q96T49</id>
    </interactant>
    <interactant intactId="EBI-742268">
        <id>O75478</id>
        <label>TADA2A</label>
    </interactant>
    <organismsDiffer>false</organismsDiffer>
    <experiments>3</experiments>
</comment>
<comment type="interaction">
    <interactant intactId="EBI-10293968">
        <id>Q96T49</id>
    </interactant>
    <interactant intactId="EBI-10172380">
        <id>Q5VWN6-2</id>
        <label>TASOR2</label>
    </interactant>
    <organismsDiffer>false</organismsDiffer>
    <experiments>3</experiments>
</comment>
<comment type="interaction">
    <interactant intactId="EBI-10293968">
        <id>Q96T49</id>
    </interactant>
    <interactant intactId="EBI-2932492">
        <id>Q99757</id>
        <label>TXN2</label>
    </interactant>
    <organismsDiffer>false</organismsDiffer>
    <experiments>3</experiments>
</comment>
<comment type="interaction">
    <interactant intactId="EBI-10293968">
        <id>Q96T49</id>
    </interactant>
    <interactant intactId="EBI-11741890">
        <id>Q86VK4-3</id>
        <label>ZNF410</label>
    </interactant>
    <organismsDiffer>false</organismsDiffer>
    <experiments>3</experiments>
</comment>
<comment type="interaction">
    <interactant intactId="EBI-10293968">
        <id>Q96T49</id>
    </interactant>
    <interactant intactId="EBI-10273713">
        <id>Q8TBZ8</id>
        <label>ZNF564</label>
    </interactant>
    <organismsDiffer>false</organismsDiffer>
    <experiments>5</experiments>
</comment>
<comment type="subcellular location">
    <subcellularLocation>
        <location evidence="7 10">Cell membrane</location>
    </subcellularLocation>
    <subcellularLocation>
        <location evidence="12">Cell membrane</location>
        <topology evidence="12">Lipid-anchor</topology>
    </subcellularLocation>
    <subcellularLocation>
        <location evidence="7">Nucleus</location>
    </subcellularLocation>
    <subcellularLocation>
        <location evidence="9">Cell projection</location>
    </subcellularLocation>
    <text evidence="3 6 9">Colocalizes with RPSA/LAMR1 in the cell membrane (PubMed:16263087). Localizes to the perinuclear region (By similarity). Colocalizes with PTEN at the tip of EC projections (PubMed:25007873).</text>
</comment>
<comment type="alternative products">
    <event type="alternative splicing"/>
    <isoform>
        <id>Q96T49-1</id>
        <name>1</name>
        <sequence type="displayed"/>
    </isoform>
    <isoform>
        <id>Q96T49-2</id>
        <name>2</name>
        <sequence type="described" ref="VSP_047508"/>
    </isoform>
</comment>
<comment type="induction">
    <text evidence="8 12">Inhibited by TGFB1 (Probable). Down-regulated by LPS (PubMed:21907835).</text>
</comment>
<comment type="PTM">
    <text evidence="3">Phosphorylated by PKA and, after PKA priming, by GSK3B. Phosphorylation by GSK3B reduces its association with PP1C and enhances PP1C activity. Dephosphorylation by its associated PP1C results in enhanced association with PP1C, but reduced PP1C activity (By similarity).</text>
</comment>
<comment type="sequence caution" evidence="12">
    <conflict type="erroneous initiation">
        <sequence resource="EMBL-CDS" id="BAA74846"/>
    </conflict>
    <text>Extended N-terminus.</text>
</comment>
<gene>
    <name type="primary">PPP1R16B</name>
    <name type="synonym">ANKRD4</name>
    <name type="synonym">KIAA0823</name>
</gene>
<sequence>MASHVDLLTELQLLEKVPTLERLRAAQKRRAQQLKKWAQYEQDLQHRKRKHERKRSTGGRRKKVSFEASVALLEASLRNDAEEVRYFLKNKVSPDLCNEDGLTALHQCCIDNFEEIVKLLLSHGANVNAKDNELWTPLHAAATCGHINLVKILVQYGADLLAVNSDGNMPYDLCEDEPTLDVIETCMAYQGITQEKINEMRVAPEQQMIADIHCMIAAGQDLDWIDAQGATLLHIAGANGYLRAAELLLDHGVRVDVKDWDGWEPLHAAAFWGQMQMAELLVSHGASLSARTSMDEMPIDLCEEEEFKVLLLELKHKHDVIMKSQLRHKSSLSRRTSSAGSRGKVVRRASLSDRTNLYRKEYEGEAILWQRSAAEDQRTSTYNGDIRETRTDQENKDPNPRLEKPVLLSEFPTKIPRGELDMPVENGLRAPVSAYQYALANGDVWKVHEVPDYSMAYGNPGVADATPPWSSYKEQSPQTLLELKRQRAAAKLLSHPFLSTHLGSSMARTGESSSEGKAPLIGGRTSPYSSNGTSVYYTVTSGDPPLLKFKAPIEEMEEKVHGCCRIS</sequence>
<name>PP16B_HUMAN</name>
<reference key="1">
    <citation type="journal article" date="2002" name="Am. J. Physiol.">
        <title>TIMAP, a novel CAAX box protein regulated by TGF-beta1 and expressed in endothelial cells.</title>
        <authorList>
            <person name="Cao W."/>
            <person name="Mattagajasingh S.N."/>
            <person name="Xu H."/>
            <person name="Kim K."/>
            <person name="Fierlbeck W."/>
            <person name="Deng J."/>
            <person name="Lowenstein C.J."/>
            <person name="Ballermann B.J."/>
        </authorList>
    </citation>
    <scope>NUCLEOTIDE SEQUENCE [MRNA] (ISOFORM 1)</scope>
</reference>
<reference key="2">
    <citation type="journal article" date="1998" name="DNA Res.">
        <title>Prediction of the coding sequences of unidentified human genes. XII. The complete sequences of 100 new cDNA clones from brain which code for large proteins in vitro.</title>
        <authorList>
            <person name="Nagase T."/>
            <person name="Ishikawa K."/>
            <person name="Suyama M."/>
            <person name="Kikuno R."/>
            <person name="Hirosawa M."/>
            <person name="Miyajima N."/>
            <person name="Tanaka A."/>
            <person name="Kotani H."/>
            <person name="Nomura N."/>
            <person name="Ohara O."/>
        </authorList>
    </citation>
    <scope>NUCLEOTIDE SEQUENCE [LARGE SCALE MRNA] (ISOFORM 1)</scope>
    <source>
        <tissue>Brain</tissue>
    </source>
</reference>
<reference key="3">
    <citation type="journal article" date="2002" name="DNA Res.">
        <title>Construction of expression-ready cDNA clones for KIAA genes: manual curation of 330 KIAA cDNA clones.</title>
        <authorList>
            <person name="Nakajima D."/>
            <person name="Okazaki N."/>
            <person name="Yamakawa H."/>
            <person name="Kikuno R."/>
            <person name="Ohara O."/>
            <person name="Nagase T."/>
        </authorList>
    </citation>
    <scope>SEQUENCE REVISION</scope>
</reference>
<reference key="4">
    <citation type="journal article" date="2001" name="Nature">
        <title>The DNA sequence and comparative analysis of human chromosome 20.</title>
        <authorList>
            <person name="Deloukas P."/>
            <person name="Matthews L.H."/>
            <person name="Ashurst J.L."/>
            <person name="Burton J."/>
            <person name="Gilbert J.G.R."/>
            <person name="Jones M."/>
            <person name="Stavrides G."/>
            <person name="Almeida J.P."/>
            <person name="Babbage A.K."/>
            <person name="Bagguley C.L."/>
            <person name="Bailey J."/>
            <person name="Barlow K.F."/>
            <person name="Bates K.N."/>
            <person name="Beard L.M."/>
            <person name="Beare D.M."/>
            <person name="Beasley O.P."/>
            <person name="Bird C.P."/>
            <person name="Blakey S.E."/>
            <person name="Bridgeman A.M."/>
            <person name="Brown A.J."/>
            <person name="Buck D."/>
            <person name="Burrill W.D."/>
            <person name="Butler A.P."/>
            <person name="Carder C."/>
            <person name="Carter N.P."/>
            <person name="Chapman J.C."/>
            <person name="Clamp M."/>
            <person name="Clark G."/>
            <person name="Clark L.N."/>
            <person name="Clark S.Y."/>
            <person name="Clee C.M."/>
            <person name="Clegg S."/>
            <person name="Cobley V.E."/>
            <person name="Collier R.E."/>
            <person name="Connor R.E."/>
            <person name="Corby N.R."/>
            <person name="Coulson A."/>
            <person name="Coville G.J."/>
            <person name="Deadman R."/>
            <person name="Dhami P.D."/>
            <person name="Dunn M."/>
            <person name="Ellington A.G."/>
            <person name="Frankland J.A."/>
            <person name="Fraser A."/>
            <person name="French L."/>
            <person name="Garner P."/>
            <person name="Grafham D.V."/>
            <person name="Griffiths C."/>
            <person name="Griffiths M.N.D."/>
            <person name="Gwilliam R."/>
            <person name="Hall R.E."/>
            <person name="Hammond S."/>
            <person name="Harley J.L."/>
            <person name="Heath P.D."/>
            <person name="Ho S."/>
            <person name="Holden J.L."/>
            <person name="Howden P.J."/>
            <person name="Huckle E."/>
            <person name="Hunt A.R."/>
            <person name="Hunt S.E."/>
            <person name="Jekosch K."/>
            <person name="Johnson C.M."/>
            <person name="Johnson D."/>
            <person name="Kay M.P."/>
            <person name="Kimberley A.M."/>
            <person name="King A."/>
            <person name="Knights A."/>
            <person name="Laird G.K."/>
            <person name="Lawlor S."/>
            <person name="Lehvaeslaiho M.H."/>
            <person name="Leversha M.A."/>
            <person name="Lloyd C."/>
            <person name="Lloyd D.M."/>
            <person name="Lovell J.D."/>
            <person name="Marsh V.L."/>
            <person name="Martin S.L."/>
            <person name="McConnachie L.J."/>
            <person name="McLay K."/>
            <person name="McMurray A.A."/>
            <person name="Milne S.A."/>
            <person name="Mistry D."/>
            <person name="Moore M.J.F."/>
            <person name="Mullikin J.C."/>
            <person name="Nickerson T."/>
            <person name="Oliver K."/>
            <person name="Parker A."/>
            <person name="Patel R."/>
            <person name="Pearce T.A.V."/>
            <person name="Peck A.I."/>
            <person name="Phillimore B.J.C.T."/>
            <person name="Prathalingam S.R."/>
            <person name="Plumb R.W."/>
            <person name="Ramsay H."/>
            <person name="Rice C.M."/>
            <person name="Ross M.T."/>
            <person name="Scott C.E."/>
            <person name="Sehra H.K."/>
            <person name="Shownkeen R."/>
            <person name="Sims S."/>
            <person name="Skuce C.D."/>
            <person name="Smith M.L."/>
            <person name="Soderlund C."/>
            <person name="Steward C.A."/>
            <person name="Sulston J.E."/>
            <person name="Swann R.M."/>
            <person name="Sycamore N."/>
            <person name="Taylor R."/>
            <person name="Tee L."/>
            <person name="Thomas D.W."/>
            <person name="Thorpe A."/>
            <person name="Tracey A."/>
            <person name="Tromans A.C."/>
            <person name="Vaudin M."/>
            <person name="Wall M."/>
            <person name="Wallis J.M."/>
            <person name="Whitehead S.L."/>
            <person name="Whittaker P."/>
            <person name="Willey D.L."/>
            <person name="Williams L."/>
            <person name="Williams S.A."/>
            <person name="Wilming L."/>
            <person name="Wray P.W."/>
            <person name="Hubbard T."/>
            <person name="Durbin R.M."/>
            <person name="Bentley D.R."/>
            <person name="Beck S."/>
            <person name="Rogers J."/>
        </authorList>
    </citation>
    <scope>NUCLEOTIDE SEQUENCE [LARGE SCALE GENOMIC DNA]</scope>
</reference>
<reference key="5">
    <citation type="submission" date="2005-09" db="EMBL/GenBank/DDBJ databases">
        <authorList>
            <person name="Mural R.J."/>
            <person name="Istrail S."/>
            <person name="Sutton G.G."/>
            <person name="Florea L."/>
            <person name="Halpern A.L."/>
            <person name="Mobarry C.M."/>
            <person name="Lippert R."/>
            <person name="Walenz B."/>
            <person name="Shatkay H."/>
            <person name="Dew I."/>
            <person name="Miller J.R."/>
            <person name="Flanigan M.J."/>
            <person name="Edwards N.J."/>
            <person name="Bolanos R."/>
            <person name="Fasulo D."/>
            <person name="Halldorsson B.V."/>
            <person name="Hannenhalli S."/>
            <person name="Turner R."/>
            <person name="Yooseph S."/>
            <person name="Lu F."/>
            <person name="Nusskern D.R."/>
            <person name="Shue B.C."/>
            <person name="Zheng X.H."/>
            <person name="Zhong F."/>
            <person name="Delcher A.L."/>
            <person name="Huson D.H."/>
            <person name="Kravitz S.A."/>
            <person name="Mouchard L."/>
            <person name="Reinert K."/>
            <person name="Remington K.A."/>
            <person name="Clark A.G."/>
            <person name="Waterman M.S."/>
            <person name="Eichler E.E."/>
            <person name="Adams M.D."/>
            <person name="Hunkapiller M.W."/>
            <person name="Myers E.W."/>
            <person name="Venter J.C."/>
        </authorList>
    </citation>
    <scope>NUCLEOTIDE SEQUENCE [LARGE SCALE GENOMIC DNA]</scope>
</reference>
<reference key="6">
    <citation type="journal article" date="2004" name="Genome Res.">
        <title>The status, quality, and expansion of the NIH full-length cDNA project: the Mammalian Gene Collection (MGC).</title>
        <authorList>
            <consortium name="The MGC Project Team"/>
        </authorList>
    </citation>
    <scope>NUCLEOTIDE SEQUENCE [LARGE SCALE MRNA] (ISOFORM 1)</scope>
</reference>
<reference key="7">
    <citation type="journal article" date="2004" name="J. Mol. Biol.">
        <title>Alternative splice variants encoding unstable protein domains exist in the human brain.</title>
        <authorList>
            <person name="Homma K."/>
            <person name="Kikuno R.F."/>
            <person name="Nagase T."/>
            <person name="Ohara O."/>
            <person name="Nishikawa K."/>
        </authorList>
    </citation>
    <scope>NUCLEOTIDE SEQUENCE [MRNA] OF 58-525 (ISOFORM 2)</scope>
    <scope>ALTERNATIVE SPLICING</scope>
    <source>
        <tissue>Brain</tissue>
    </source>
</reference>
<reference key="8">
    <citation type="journal article" date="2005" name="Biochem. Biophys. Res. Commun.">
        <title>The protein phosphatase-1 targeting subunit TIMAP regulates LAMR1 phosphorylation.</title>
        <authorList>
            <person name="Kim K."/>
            <person name="Li L."/>
            <person name="Kozlowski K."/>
            <person name="Suh H.S."/>
            <person name="Cao W."/>
            <person name="Ballermann B.J."/>
        </authorList>
    </citation>
    <scope>FUNCTION</scope>
    <scope>SUBCELLULAR LOCATION</scope>
    <scope>INTERACTION WITH PPP1CA AND RPSA</scope>
</reference>
<reference key="9">
    <citation type="journal article" date="2008" name="Am. J. Physiol.">
        <title>TIMAP is a positive regulator of pulmonary endothelial barrier function.</title>
        <authorList>
            <person name="Csortos C."/>
            <person name="Czikora I."/>
            <person name="Bogatcheva N.V."/>
            <person name="Adyshev D.M."/>
            <person name="Poirier C."/>
            <person name="Olah G."/>
            <person name="Verin A.D."/>
        </authorList>
    </citation>
    <scope>FUNCTION</scope>
    <scope>SUBCELLULAR LOCATION</scope>
    <scope>PHOSPHORYLATION</scope>
    <scope>INTERACTION WITH PPP1CB AND MSN</scope>
</reference>
<reference key="10">
    <citation type="journal article" date="2011" name="Respir. Physiol. Neurobiol.">
        <title>TIMAP protects endothelial barrier from LPS-induced vascular leakage and is down-regulated by LPS.</title>
        <authorList>
            <person name="Poirier C."/>
            <person name="Gorshkov B.A."/>
            <person name="Zemskova M.A."/>
            <person name="Bogatcheva N.V."/>
            <person name="Verin A.D."/>
        </authorList>
    </citation>
    <scope>INDUCTION BY LPS</scope>
</reference>
<reference key="11">
    <citation type="journal article" date="2013" name="J. Proteome Res.">
        <title>Toward a comprehensive characterization of a human cancer cell phosphoproteome.</title>
        <authorList>
            <person name="Zhou H."/>
            <person name="Di Palma S."/>
            <person name="Preisinger C."/>
            <person name="Peng M."/>
            <person name="Polat A.N."/>
            <person name="Heck A.J."/>
            <person name="Mohammed S."/>
        </authorList>
    </citation>
    <scope>PHOSPHORYLATION [LARGE SCALE ANALYSIS] AT SER-350 AND SER-476</scope>
    <scope>IDENTIFICATION BY MASS SPECTROMETRY [LARGE SCALE ANALYSIS]</scope>
    <source>
        <tissue>Erythroleukemia</tissue>
    </source>
</reference>
<reference key="12">
    <citation type="journal article" date="2014" name="Am. J. Physiol.">
        <title>TIMAP promotes angiogenesis by suppressing PTEN-mediated Akt inhibition in human glomerular endothelial cells.</title>
        <authorList>
            <person name="Obeidat M."/>
            <person name="Li L."/>
            <person name="Ballermann B.J."/>
        </authorList>
    </citation>
    <scope>FUNCTION</scope>
    <scope>SUBCELLULAR LOCATION</scope>
    <scope>INTERACTION WITH PTEN</scope>
</reference>
<reference key="13">
    <citation type="journal article" date="2015" name="Int. J. Biochem. Cell Biol.">
        <title>Elongation factor-1A1 is a novel substrate of the protein phosphatase 1-TIMAP complex.</title>
        <authorList>
            <person name="Boratko A."/>
            <person name="Peter M."/>
            <person name="Thalwieser Z."/>
            <person name="Kovacs E."/>
            <person name="Csortos C."/>
        </authorList>
    </citation>
    <scope>FUNCTION</scope>
    <scope>SUBCELLULAR LOCATION</scope>
    <scope>INTERACTION WITH EEF1A1</scope>
    <scope>MUTAGENESIS OF GLY-252</scope>
</reference>
<keyword id="KW-0025">Alternative splicing</keyword>
<keyword id="KW-0040">ANK repeat</keyword>
<keyword id="KW-1003">Cell membrane</keyword>
<keyword id="KW-0966">Cell projection</keyword>
<keyword id="KW-0175">Coiled coil</keyword>
<keyword id="KW-0449">Lipoprotein</keyword>
<keyword id="KW-0472">Membrane</keyword>
<keyword id="KW-0488">Methylation</keyword>
<keyword id="KW-0539">Nucleus</keyword>
<keyword id="KW-0564">Palmitate</keyword>
<keyword id="KW-0597">Phosphoprotein</keyword>
<keyword id="KW-0636">Prenylation</keyword>
<keyword id="KW-1267">Proteomics identification</keyword>
<keyword id="KW-1185">Reference proteome</keyword>
<keyword id="KW-0677">Repeat</keyword>
<proteinExistence type="evidence at protein level"/>